<name>OLED_SHEON</name>
<reference key="1">
    <citation type="journal article" date="2002" name="Nat. Biotechnol.">
        <title>Genome sequence of the dissimilatory metal ion-reducing bacterium Shewanella oneidensis.</title>
        <authorList>
            <person name="Heidelberg J.F."/>
            <person name="Paulsen I.T."/>
            <person name="Nelson K.E."/>
            <person name="Gaidos E.J."/>
            <person name="Nelson W.C."/>
            <person name="Read T.D."/>
            <person name="Eisen J.A."/>
            <person name="Seshadri R."/>
            <person name="Ward N.L."/>
            <person name="Methe B.A."/>
            <person name="Clayton R.A."/>
            <person name="Meyer T."/>
            <person name="Tsapin A."/>
            <person name="Scott J."/>
            <person name="Beanan M.J."/>
            <person name="Brinkac L.M."/>
            <person name="Daugherty S.C."/>
            <person name="DeBoy R.T."/>
            <person name="Dodson R.J."/>
            <person name="Durkin A.S."/>
            <person name="Haft D.H."/>
            <person name="Kolonay J.F."/>
            <person name="Madupu R."/>
            <person name="Peterson J.D."/>
            <person name="Umayam L.A."/>
            <person name="White O."/>
            <person name="Wolf A.M."/>
            <person name="Vamathevan J.J."/>
            <person name="Weidman J.F."/>
            <person name="Impraim M."/>
            <person name="Lee K."/>
            <person name="Berry K.J."/>
            <person name="Lee C."/>
            <person name="Mueller J."/>
            <person name="Khouri H.M."/>
            <person name="Gill J."/>
            <person name="Utterback T.R."/>
            <person name="McDonald L.A."/>
            <person name="Feldblyum T.V."/>
            <person name="Smith H.O."/>
            <person name="Venter J.C."/>
            <person name="Nealson K.H."/>
            <person name="Fraser C.M."/>
        </authorList>
    </citation>
    <scope>NUCLEOTIDE SEQUENCE [LARGE SCALE GENOMIC DNA]</scope>
    <source>
        <strain>ATCC 700550 / JCM 31522 / CIP 106686 / LMG 19005 / NCIMB 14063 / MR-1</strain>
    </source>
</reference>
<reference key="2">
    <citation type="journal article" date="2010" name="Appl. Environ. Microbiol.">
        <title>Structure, function, and insights into the biosynthesis of a head-to-head hydrocarbon in Shewanella oneidensis strain MR-1.</title>
        <authorList>
            <person name="Sukovich D.J."/>
            <person name="Seffernick J.L."/>
            <person name="Richman J.E."/>
            <person name="Hunt K.A."/>
            <person name="Gralnick J.A."/>
            <person name="Wackett L.P."/>
        </authorList>
    </citation>
    <scope>FUNCTION IN OLEFIN BIOSYNTHESIS</scope>
    <scope>DISRUPTION PHENOTYPE</scope>
    <source>
        <strain>ATCC 700550 / JCM 31522 / CIP 106686 / LMG 19005 / NCIMB 14063 / MR-1</strain>
    </source>
</reference>
<dbReference type="EC" id="1.1.1.412" evidence="1"/>
<dbReference type="EMBL" id="AE014299">
    <property type="protein sequence ID" value="AAN54799.1"/>
    <property type="molecule type" value="Genomic_DNA"/>
</dbReference>
<dbReference type="RefSeq" id="NP_717355.1">
    <property type="nucleotide sequence ID" value="NC_004347.2"/>
</dbReference>
<dbReference type="RefSeq" id="WP_011071877.1">
    <property type="nucleotide sequence ID" value="NC_004347.2"/>
</dbReference>
<dbReference type="SMR" id="Q8EG63"/>
<dbReference type="STRING" id="211586.SO_1745"/>
<dbReference type="PaxDb" id="211586-SO_1745"/>
<dbReference type="KEGG" id="son:SO_1745"/>
<dbReference type="PATRIC" id="fig|1028802.3.peg.1160"/>
<dbReference type="eggNOG" id="COG0451">
    <property type="taxonomic scope" value="Bacteria"/>
</dbReference>
<dbReference type="HOGENOM" id="CLU_007383_6_1_6"/>
<dbReference type="OrthoDB" id="9803010at2"/>
<dbReference type="PhylomeDB" id="Q8EG63"/>
<dbReference type="BioCyc" id="MetaCyc:MONOMER-17300"/>
<dbReference type="BioCyc" id="SONE211586:G1GMP-1600-MONOMER"/>
<dbReference type="Proteomes" id="UP000008186">
    <property type="component" value="Chromosome"/>
</dbReference>
<dbReference type="GO" id="GO:0016616">
    <property type="term" value="F:oxidoreductase activity, acting on the CH-OH group of donors, NAD or NADP as acceptor"/>
    <property type="evidence" value="ECO:0007669"/>
    <property type="project" value="InterPro"/>
</dbReference>
<dbReference type="GO" id="GO:0006694">
    <property type="term" value="P:steroid biosynthetic process"/>
    <property type="evidence" value="ECO:0007669"/>
    <property type="project" value="InterPro"/>
</dbReference>
<dbReference type="Gene3D" id="3.40.50.720">
    <property type="entry name" value="NAD(P)-binding Rossmann-like Domain"/>
    <property type="match status" value="1"/>
</dbReference>
<dbReference type="InterPro" id="IPR053585">
    <property type="entry name" value="3-beta-HSD-like"/>
</dbReference>
<dbReference type="InterPro" id="IPR002225">
    <property type="entry name" value="3Beta_OHSteriod_DH/Estase"/>
</dbReference>
<dbReference type="InterPro" id="IPR050177">
    <property type="entry name" value="Lipid_A_modif_metabolic_enz"/>
</dbReference>
<dbReference type="InterPro" id="IPR036291">
    <property type="entry name" value="NAD(P)-bd_dom_sf"/>
</dbReference>
<dbReference type="NCBIfam" id="NF042423">
    <property type="entry name" value="oxyalk_red_Shew"/>
    <property type="match status" value="1"/>
</dbReference>
<dbReference type="PANTHER" id="PTHR43245">
    <property type="entry name" value="BIFUNCTIONAL POLYMYXIN RESISTANCE PROTEIN ARNA"/>
    <property type="match status" value="1"/>
</dbReference>
<dbReference type="PANTHER" id="PTHR43245:SF51">
    <property type="entry name" value="SHORT CHAIN DEHYDROGENASE_REDUCTASE FAMILY 42E, MEMBER 2"/>
    <property type="match status" value="1"/>
</dbReference>
<dbReference type="Pfam" id="PF01073">
    <property type="entry name" value="3Beta_HSD"/>
    <property type="match status" value="1"/>
</dbReference>
<dbReference type="SUPFAM" id="SSF51735">
    <property type="entry name" value="NAD(P)-binding Rossmann-fold domains"/>
    <property type="match status" value="1"/>
</dbReference>
<sequence length="387" mass="41885">MTDNSSISLTPADLEHVPLQPTRLKQVGGDQACIKLSLDAREQTALDALAAKVSHAFVTGAGGFLGKAICQRLIAAGIKVTGFARGRYLELEALGVTMVQGDLVNPEQVKQAMQGCDIVFHVASKAGVWGDRDSYFCPNVKGAANVIAACKALKINKLVYTSTPSVTFAGEDESGINESTPYASRFLNYYAHSKAIAEKMMLDANQSSSTNAAYVLKTVALRPHLIWGPNDPHLVPRVLARGRLGKLKLVGREDKLVDTIYIDNAAYAHVLAALELCQATPKCQGKAYFISNDEPVTMAKMLNMILACDGLPPVTQRVPQMLAYAVGAVLETAYRLLNKQEEPIMTRFVAKQLSCSHYFDISAAKQDFGYSALVSIEEGMKRLKASL</sequence>
<organism>
    <name type="scientific">Shewanella oneidensis (strain ATCC 700550 / JCM 31522 / CIP 106686 / LMG 19005 / NCIMB 14063 / MR-1)</name>
    <dbReference type="NCBI Taxonomy" id="211586"/>
    <lineage>
        <taxon>Bacteria</taxon>
        <taxon>Pseudomonadati</taxon>
        <taxon>Pseudomonadota</taxon>
        <taxon>Gammaproteobacteria</taxon>
        <taxon>Alteromonadales</taxon>
        <taxon>Shewanellaceae</taxon>
        <taxon>Shewanella</taxon>
    </lineage>
</organism>
<proteinExistence type="evidence at protein level"/>
<keyword id="KW-0521">NADP</keyword>
<keyword id="KW-0560">Oxidoreductase</keyword>
<keyword id="KW-1185">Reference proteome</keyword>
<comment type="function">
    <text evidence="1 2">Involved in olefin biosynthesis (PubMed:20418444). Catalyzes the reversible stereospecific NADPH-dependent reduction of 2-alkyl-3-oxoalkanoic acids to 2-alkyl-3-hydroxyalkanoic acids (By similarity). The S.oneidensis oleABCD genes produce 3,6,9,12,15,19,22,25,28-hentriacontanonaene, which may aid the cells in adapting to a sudden drop in temperature (PubMed:20418444).</text>
</comment>
<comment type="catalytic activity">
    <reaction evidence="1">
        <text>a (2R,3S)-2-alkyl-3-hydroxyalkanoate + NADP(+) = an (R)-2-alkyl-3-oxoalkanoate + NADPH + H(+)</text>
        <dbReference type="Rhea" id="RHEA:54796"/>
        <dbReference type="ChEBI" id="CHEBI:15378"/>
        <dbReference type="ChEBI" id="CHEBI:57783"/>
        <dbReference type="ChEBI" id="CHEBI:58349"/>
        <dbReference type="ChEBI" id="CHEBI:138340"/>
        <dbReference type="ChEBI" id="CHEBI:138341"/>
        <dbReference type="EC" id="1.1.1.412"/>
    </reaction>
    <physiologicalReaction direction="right-to-left" evidence="1">
        <dbReference type="Rhea" id="RHEA:54798"/>
    </physiologicalReaction>
</comment>
<comment type="disruption phenotype">
    <text evidence="2">Deletion of the entire oleABCD gene cluster leads to the complete absence of nonpolar extractable products. The oleABCD deletion strain shows a significantly longer lag phase than the wild-type strain when shifted to a lower temperature.</text>
</comment>
<comment type="similarity">
    <text evidence="4">Belongs to the 3-beta-HSD family.</text>
</comment>
<feature type="chain" id="PRO_0000446918" description="2-alkyl-3-oxoalkanoate reductase">
    <location>
        <begin position="1"/>
        <end position="387"/>
    </location>
</feature>
<feature type="active site" description="Proton acceptor" evidence="1">
    <location>
        <position position="190"/>
    </location>
</feature>
<feature type="binding site" evidence="1">
    <location>
        <position position="194"/>
    </location>
    <ligand>
        <name>NADP(+)</name>
        <dbReference type="ChEBI" id="CHEBI:58349"/>
    </ligand>
</feature>
<evidence type="ECO:0000250" key="1">
    <source>
        <dbReference type="UniProtKB" id="B2FI29"/>
    </source>
</evidence>
<evidence type="ECO:0000269" key="2">
    <source>
    </source>
</evidence>
<evidence type="ECO:0000303" key="3">
    <source>
    </source>
</evidence>
<evidence type="ECO:0000305" key="4"/>
<evidence type="ECO:0000312" key="5">
    <source>
        <dbReference type="EMBL" id="AAN54799.1"/>
    </source>
</evidence>
<accession>Q8EG63</accession>
<protein>
    <recommendedName>
        <fullName evidence="4">2-alkyl-3-oxoalkanoate reductase</fullName>
        <ecNumber evidence="1">1.1.1.412</ecNumber>
    </recommendedName>
</protein>
<gene>
    <name evidence="3" type="primary">oleD</name>
    <name evidence="5" type="ordered locus">SO_1745</name>
</gene>